<keyword id="KW-0150">Chloroplast</keyword>
<keyword id="KW-0472">Membrane</keyword>
<keyword id="KW-0602">Photosynthesis</keyword>
<keyword id="KW-0604">Photosystem II</keyword>
<keyword id="KW-0934">Plastid</keyword>
<keyword id="KW-0674">Reaction center</keyword>
<keyword id="KW-0793">Thylakoid</keyword>
<keyword id="KW-0812">Transmembrane</keyword>
<keyword id="KW-1133">Transmembrane helix</keyword>
<proteinExistence type="inferred from homology"/>
<geneLocation type="chloroplast"/>
<dbReference type="EMBL" id="AP006714">
    <property type="protein sequence ID" value="BAD27306.1"/>
    <property type="molecule type" value="Genomic_DNA"/>
</dbReference>
<dbReference type="RefSeq" id="YP_009389584.1">
    <property type="nucleotide sequence ID" value="NC_035224.1"/>
</dbReference>
<dbReference type="SMR" id="Q6ENV0"/>
<dbReference type="GeneID" id="33347798"/>
<dbReference type="GO" id="GO:0009535">
    <property type="term" value="C:chloroplast thylakoid membrane"/>
    <property type="evidence" value="ECO:0007669"/>
    <property type="project" value="UniProtKB-SubCell"/>
</dbReference>
<dbReference type="GO" id="GO:0009539">
    <property type="term" value="C:photosystem II reaction center"/>
    <property type="evidence" value="ECO:0007669"/>
    <property type="project" value="InterPro"/>
</dbReference>
<dbReference type="GO" id="GO:0015979">
    <property type="term" value="P:photosynthesis"/>
    <property type="evidence" value="ECO:0007669"/>
    <property type="project" value="UniProtKB-UniRule"/>
</dbReference>
<dbReference type="Gene3D" id="6.10.250.2070">
    <property type="match status" value="1"/>
</dbReference>
<dbReference type="HAMAP" id="MF_01305">
    <property type="entry name" value="PSII_PsbJ"/>
    <property type="match status" value="1"/>
</dbReference>
<dbReference type="InterPro" id="IPR002682">
    <property type="entry name" value="PSII_PsbJ"/>
</dbReference>
<dbReference type="InterPro" id="IPR037267">
    <property type="entry name" value="PSII_PsbJ_sf"/>
</dbReference>
<dbReference type="NCBIfam" id="NF002722">
    <property type="entry name" value="PRK02565.1"/>
    <property type="match status" value="1"/>
</dbReference>
<dbReference type="PANTHER" id="PTHR34812">
    <property type="entry name" value="PHOTOSYSTEM II REACTION CENTER PROTEIN J"/>
    <property type="match status" value="1"/>
</dbReference>
<dbReference type="PANTHER" id="PTHR34812:SF3">
    <property type="entry name" value="PHOTOSYSTEM II REACTION CENTER PROTEIN J"/>
    <property type="match status" value="1"/>
</dbReference>
<dbReference type="Pfam" id="PF01788">
    <property type="entry name" value="PsbJ"/>
    <property type="match status" value="1"/>
</dbReference>
<dbReference type="SUPFAM" id="SSF161021">
    <property type="entry name" value="Photosystem II reaction center protein J, PsbJ"/>
    <property type="match status" value="1"/>
</dbReference>
<accession>Q6ENV0</accession>
<comment type="function">
    <text evidence="1">One of the components of the core complex of photosystem II (PSII). PSII is a light-driven water:plastoquinone oxidoreductase that uses light energy to abstract electrons from H(2)O, generating O(2) and a proton gradient subsequently used for ATP formation. It consists of a core antenna complex that captures photons, and an electron transfer chain that converts photonic excitation into a charge separation.</text>
</comment>
<comment type="subunit">
    <text evidence="1">PSII is composed of 1 copy each of membrane proteins PsbA, PsbB, PsbC, PsbD, PsbE, PsbF, PsbH, PsbI, PsbJ, PsbK, PsbL, PsbM, PsbT, PsbX, PsbY, PsbZ, Psb30/Ycf12, at least 3 peripheral proteins of the oxygen-evolving complex and a large number of cofactors. It forms dimeric complexes.</text>
</comment>
<comment type="subcellular location">
    <subcellularLocation>
        <location evidence="1">Plastid</location>
        <location evidence="1">Chloroplast thylakoid membrane</location>
        <topology evidence="1">Single-pass membrane protein</topology>
    </subcellularLocation>
</comment>
<comment type="similarity">
    <text evidence="1">Belongs to the PsbJ family.</text>
</comment>
<reference key="1">
    <citation type="journal article" date="2004" name="DNA Res.">
        <title>Complete nucleotide sequence of the sugarcane (Saccharum officinarum) chloroplast genome: a comparative analysis of four monocot chloroplast genomes.</title>
        <authorList>
            <person name="Asano T."/>
            <person name="Tsudzuki T."/>
            <person name="Takahashi S."/>
            <person name="Shimada H."/>
            <person name="Kadowaki K."/>
        </authorList>
    </citation>
    <scope>NUCLEOTIDE SEQUENCE [LARGE SCALE GENOMIC DNA]</scope>
</reference>
<protein>
    <recommendedName>
        <fullName evidence="1">Photosystem II reaction center protein J</fullName>
        <shortName evidence="1">PSII-J</shortName>
    </recommendedName>
</protein>
<gene>
    <name evidence="1" type="primary">psbJ</name>
</gene>
<sequence>MADTTGRIPLWLIGTVTGILVIGLIGVFFYGSYSGLGSSL</sequence>
<evidence type="ECO:0000255" key="1">
    <source>
        <dbReference type="HAMAP-Rule" id="MF_01305"/>
    </source>
</evidence>
<organism>
    <name type="scientific">Saccharum officinarum</name>
    <name type="common">Sugarcane</name>
    <dbReference type="NCBI Taxonomy" id="4547"/>
    <lineage>
        <taxon>Eukaryota</taxon>
        <taxon>Viridiplantae</taxon>
        <taxon>Streptophyta</taxon>
        <taxon>Embryophyta</taxon>
        <taxon>Tracheophyta</taxon>
        <taxon>Spermatophyta</taxon>
        <taxon>Magnoliopsida</taxon>
        <taxon>Liliopsida</taxon>
        <taxon>Poales</taxon>
        <taxon>Poaceae</taxon>
        <taxon>PACMAD clade</taxon>
        <taxon>Panicoideae</taxon>
        <taxon>Andropogonodae</taxon>
        <taxon>Andropogoneae</taxon>
        <taxon>Saccharinae</taxon>
        <taxon>Saccharum</taxon>
        <taxon>Saccharum officinarum species complex</taxon>
    </lineage>
</organism>
<feature type="chain" id="PRO_0000216617" description="Photosystem II reaction center protein J">
    <location>
        <begin position="1"/>
        <end position="40"/>
    </location>
</feature>
<feature type="transmembrane region" description="Helical" evidence="1">
    <location>
        <begin position="8"/>
        <end position="28"/>
    </location>
</feature>
<name>PSBJ_SACOF</name>